<accession>B2UYC9</accession>
<reference key="1">
    <citation type="submission" date="2008-05" db="EMBL/GenBank/DDBJ databases">
        <title>Complete genome sequence of Clostridium botulinum E3 str. Alaska E43.</title>
        <authorList>
            <person name="Brinkac L.M."/>
            <person name="Brown J.L."/>
            <person name="Bruce D."/>
            <person name="Detter C."/>
            <person name="Munk C."/>
            <person name="Smith L.A."/>
            <person name="Smith T.J."/>
            <person name="Sutton G."/>
            <person name="Brettin T.S."/>
        </authorList>
    </citation>
    <scope>NUCLEOTIDE SEQUENCE [LARGE SCALE GENOMIC DNA]</scope>
    <source>
        <strain>Alaska E43 / Type E3</strain>
    </source>
</reference>
<proteinExistence type="inferred from homology"/>
<evidence type="ECO:0000255" key="1">
    <source>
        <dbReference type="HAMAP-Rule" id="MF_01341"/>
    </source>
</evidence>
<evidence type="ECO:0000256" key="2">
    <source>
        <dbReference type="SAM" id="MobiDB-lite"/>
    </source>
</evidence>
<evidence type="ECO:0000305" key="3"/>
<keyword id="KW-0687">Ribonucleoprotein</keyword>
<keyword id="KW-0689">Ribosomal protein</keyword>
<keyword id="KW-0694">RNA-binding</keyword>
<keyword id="KW-0699">rRNA-binding</keyword>
<organism>
    <name type="scientific">Clostridium botulinum (strain Alaska E43 / Type E3)</name>
    <dbReference type="NCBI Taxonomy" id="508767"/>
    <lineage>
        <taxon>Bacteria</taxon>
        <taxon>Bacillati</taxon>
        <taxon>Bacillota</taxon>
        <taxon>Clostridia</taxon>
        <taxon>Eubacteriales</taxon>
        <taxon>Clostridiaceae</taxon>
        <taxon>Clostridium</taxon>
    </lineage>
</organism>
<feature type="chain" id="PRO_1000142794" description="Large ribosomal subunit protein uL15">
    <location>
        <begin position="1"/>
        <end position="146"/>
    </location>
</feature>
<feature type="region of interest" description="Disordered" evidence="2">
    <location>
        <begin position="1"/>
        <end position="54"/>
    </location>
</feature>
<feature type="compositionally biased region" description="Gly residues" evidence="2">
    <location>
        <begin position="21"/>
        <end position="31"/>
    </location>
</feature>
<feature type="compositionally biased region" description="Gly residues" evidence="2">
    <location>
        <begin position="42"/>
        <end position="52"/>
    </location>
</feature>
<protein>
    <recommendedName>
        <fullName evidence="1">Large ribosomal subunit protein uL15</fullName>
    </recommendedName>
    <alternativeName>
        <fullName evidence="3">50S ribosomal protein L15</fullName>
    </alternativeName>
</protein>
<comment type="function">
    <text evidence="1">Binds to the 23S rRNA.</text>
</comment>
<comment type="subunit">
    <text evidence="1">Part of the 50S ribosomal subunit.</text>
</comment>
<comment type="similarity">
    <text evidence="1">Belongs to the universal ribosomal protein uL15 family.</text>
</comment>
<dbReference type="EMBL" id="CP001078">
    <property type="protein sequence ID" value="ACD51480.1"/>
    <property type="molecule type" value="Genomic_DNA"/>
</dbReference>
<dbReference type="RefSeq" id="WP_003370338.1">
    <property type="nucleotide sequence ID" value="NC_010723.1"/>
</dbReference>
<dbReference type="SMR" id="B2UYC9"/>
<dbReference type="KEGG" id="cbt:CLH_0256"/>
<dbReference type="HOGENOM" id="CLU_055188_4_2_9"/>
<dbReference type="GO" id="GO:0022625">
    <property type="term" value="C:cytosolic large ribosomal subunit"/>
    <property type="evidence" value="ECO:0007669"/>
    <property type="project" value="TreeGrafter"/>
</dbReference>
<dbReference type="GO" id="GO:0019843">
    <property type="term" value="F:rRNA binding"/>
    <property type="evidence" value="ECO:0007669"/>
    <property type="project" value="UniProtKB-UniRule"/>
</dbReference>
<dbReference type="GO" id="GO:0003735">
    <property type="term" value="F:structural constituent of ribosome"/>
    <property type="evidence" value="ECO:0007669"/>
    <property type="project" value="InterPro"/>
</dbReference>
<dbReference type="GO" id="GO:0006412">
    <property type="term" value="P:translation"/>
    <property type="evidence" value="ECO:0007669"/>
    <property type="project" value="UniProtKB-UniRule"/>
</dbReference>
<dbReference type="Gene3D" id="3.100.10.10">
    <property type="match status" value="1"/>
</dbReference>
<dbReference type="HAMAP" id="MF_01341">
    <property type="entry name" value="Ribosomal_uL15"/>
    <property type="match status" value="1"/>
</dbReference>
<dbReference type="InterPro" id="IPR030878">
    <property type="entry name" value="Ribosomal_uL15"/>
</dbReference>
<dbReference type="InterPro" id="IPR021131">
    <property type="entry name" value="Ribosomal_uL15/eL18"/>
</dbReference>
<dbReference type="InterPro" id="IPR036227">
    <property type="entry name" value="Ribosomal_uL15/eL18_sf"/>
</dbReference>
<dbReference type="InterPro" id="IPR005749">
    <property type="entry name" value="Ribosomal_uL15_bac-type"/>
</dbReference>
<dbReference type="InterPro" id="IPR001196">
    <property type="entry name" value="Ribosomal_uL15_CS"/>
</dbReference>
<dbReference type="NCBIfam" id="TIGR01071">
    <property type="entry name" value="rplO_bact"/>
    <property type="match status" value="1"/>
</dbReference>
<dbReference type="PANTHER" id="PTHR12934">
    <property type="entry name" value="50S RIBOSOMAL PROTEIN L15"/>
    <property type="match status" value="1"/>
</dbReference>
<dbReference type="PANTHER" id="PTHR12934:SF11">
    <property type="entry name" value="LARGE RIBOSOMAL SUBUNIT PROTEIN UL15M"/>
    <property type="match status" value="1"/>
</dbReference>
<dbReference type="Pfam" id="PF00828">
    <property type="entry name" value="Ribosomal_L27A"/>
    <property type="match status" value="1"/>
</dbReference>
<dbReference type="SUPFAM" id="SSF52080">
    <property type="entry name" value="Ribosomal proteins L15p and L18e"/>
    <property type="match status" value="1"/>
</dbReference>
<dbReference type="PROSITE" id="PS00475">
    <property type="entry name" value="RIBOSOMAL_L15"/>
    <property type="match status" value="1"/>
</dbReference>
<gene>
    <name evidence="1" type="primary">rplO</name>
    <name type="ordered locus">CLH_0256</name>
</gene>
<sequence>MKLHELQPAAGSRKAPKRVGRGTGSGLGRNAGKGEKGQNARSGGGVRPGFEGGQMPLYRRLPKRGFTNIFAKKYVSINVDRLNIFENGTEITPEVLLERRVVSKVLDGVKILGNGNLEKSLIVKGCKFSKSAIEKIEAAGGKVEVI</sequence>
<name>RL15_CLOBA</name>